<sequence>MKFSFFTLFPSLISGYFEDSILKRARDEGRIEIEWVNFREFSQDRFKKVDEYQIGGGAGLVIEPRVVTQAISELKAKNQDAKILFLLPAGKPFTHQDACRLAQKESHLVLVCGRYEGIDERAIEANADEVFCMGDYILTGGEIAALALCDAVSRQIPGVLGNEESLQGESFDSFLLEAPVFARSKTPEGLSAPSEYSKGNHAKICALKRRLSLAKTQYYRPDLYKKYKIQESDKGKK</sequence>
<organism>
    <name type="scientific">Wolinella succinogenes (strain ATCC 29543 / DSM 1740 / CCUG 13145 / JCM 31913 / LMG 7466 / NCTC 11488 / FDC 602W)</name>
    <name type="common">Vibrio succinogenes</name>
    <dbReference type="NCBI Taxonomy" id="273121"/>
    <lineage>
        <taxon>Bacteria</taxon>
        <taxon>Pseudomonadati</taxon>
        <taxon>Campylobacterota</taxon>
        <taxon>Epsilonproteobacteria</taxon>
        <taxon>Campylobacterales</taxon>
        <taxon>Helicobacteraceae</taxon>
        <taxon>Wolinella</taxon>
    </lineage>
</organism>
<feature type="chain" id="PRO_0000060499" description="tRNA (guanine-N(1)-)-methyltransferase">
    <location>
        <begin position="1"/>
        <end position="237"/>
    </location>
</feature>
<feature type="binding site" evidence="1">
    <location>
        <position position="113"/>
    </location>
    <ligand>
        <name>S-adenosyl-L-methionine</name>
        <dbReference type="ChEBI" id="CHEBI:59789"/>
    </ligand>
</feature>
<feature type="binding site" evidence="1">
    <location>
        <begin position="133"/>
        <end position="138"/>
    </location>
    <ligand>
        <name>S-adenosyl-L-methionine</name>
        <dbReference type="ChEBI" id="CHEBI:59789"/>
    </ligand>
</feature>
<accession>Q7MA04</accession>
<comment type="function">
    <text evidence="1">Specifically methylates guanosine-37 in various tRNAs.</text>
</comment>
<comment type="catalytic activity">
    <reaction evidence="1">
        <text>guanosine(37) in tRNA + S-adenosyl-L-methionine = N(1)-methylguanosine(37) in tRNA + S-adenosyl-L-homocysteine + H(+)</text>
        <dbReference type="Rhea" id="RHEA:36899"/>
        <dbReference type="Rhea" id="RHEA-COMP:10145"/>
        <dbReference type="Rhea" id="RHEA-COMP:10147"/>
        <dbReference type="ChEBI" id="CHEBI:15378"/>
        <dbReference type="ChEBI" id="CHEBI:57856"/>
        <dbReference type="ChEBI" id="CHEBI:59789"/>
        <dbReference type="ChEBI" id="CHEBI:73542"/>
        <dbReference type="ChEBI" id="CHEBI:74269"/>
        <dbReference type="EC" id="2.1.1.228"/>
    </reaction>
</comment>
<comment type="subunit">
    <text evidence="1">Homodimer.</text>
</comment>
<comment type="subcellular location">
    <subcellularLocation>
        <location evidence="1">Cytoplasm</location>
    </subcellularLocation>
</comment>
<comment type="similarity">
    <text evidence="1">Belongs to the RNA methyltransferase TrmD family.</text>
</comment>
<evidence type="ECO:0000255" key="1">
    <source>
        <dbReference type="HAMAP-Rule" id="MF_00605"/>
    </source>
</evidence>
<protein>
    <recommendedName>
        <fullName evidence="1">tRNA (guanine-N(1)-)-methyltransferase</fullName>
        <ecNumber evidence="1">2.1.1.228</ecNumber>
    </recommendedName>
    <alternativeName>
        <fullName evidence="1">M1G-methyltransferase</fullName>
    </alternativeName>
    <alternativeName>
        <fullName evidence="1">tRNA [GM37] methyltransferase</fullName>
    </alternativeName>
</protein>
<name>TRMD_WOLSU</name>
<gene>
    <name evidence="1" type="primary">trmD</name>
    <name type="ordered locus">WS0551</name>
</gene>
<keyword id="KW-0963">Cytoplasm</keyword>
<keyword id="KW-0489">Methyltransferase</keyword>
<keyword id="KW-1185">Reference proteome</keyword>
<keyword id="KW-0949">S-adenosyl-L-methionine</keyword>
<keyword id="KW-0808">Transferase</keyword>
<keyword id="KW-0819">tRNA processing</keyword>
<proteinExistence type="inferred from homology"/>
<reference key="1">
    <citation type="journal article" date="2003" name="Proc. Natl. Acad. Sci. U.S.A.">
        <title>Complete genome sequence and analysis of Wolinella succinogenes.</title>
        <authorList>
            <person name="Baar C."/>
            <person name="Eppinger M."/>
            <person name="Raddatz G."/>
            <person name="Simon J."/>
            <person name="Lanz C."/>
            <person name="Klimmek O."/>
            <person name="Nandakumar R."/>
            <person name="Gross R."/>
            <person name="Rosinus A."/>
            <person name="Keller H."/>
            <person name="Jagtap P."/>
            <person name="Linke B."/>
            <person name="Meyer F."/>
            <person name="Lederer H."/>
            <person name="Schuster S.C."/>
        </authorList>
    </citation>
    <scope>NUCLEOTIDE SEQUENCE [LARGE SCALE GENOMIC DNA]</scope>
    <source>
        <strain>ATCC 29543 / DSM 1740 / CCUG 13145 / JCM 31913 / LMG 7466 / NCTC 11488 / FDC 602W</strain>
    </source>
</reference>
<dbReference type="EC" id="2.1.1.228" evidence="1"/>
<dbReference type="EMBL" id="BX571658">
    <property type="protein sequence ID" value="CAE09685.1"/>
    <property type="molecule type" value="Genomic_DNA"/>
</dbReference>
<dbReference type="RefSeq" id="WP_011138485.1">
    <property type="nucleotide sequence ID" value="NC_005090.1"/>
</dbReference>
<dbReference type="SMR" id="Q7MA04"/>
<dbReference type="STRING" id="273121.WS0551"/>
<dbReference type="KEGG" id="wsu:WS0551"/>
<dbReference type="eggNOG" id="COG0336">
    <property type="taxonomic scope" value="Bacteria"/>
</dbReference>
<dbReference type="HOGENOM" id="CLU_047363_0_1_7"/>
<dbReference type="Proteomes" id="UP000000422">
    <property type="component" value="Chromosome"/>
</dbReference>
<dbReference type="GO" id="GO:0005829">
    <property type="term" value="C:cytosol"/>
    <property type="evidence" value="ECO:0007669"/>
    <property type="project" value="TreeGrafter"/>
</dbReference>
<dbReference type="GO" id="GO:0052906">
    <property type="term" value="F:tRNA (guanine(37)-N1)-methyltransferase activity"/>
    <property type="evidence" value="ECO:0007669"/>
    <property type="project" value="UniProtKB-UniRule"/>
</dbReference>
<dbReference type="GO" id="GO:0002939">
    <property type="term" value="P:tRNA N1-guanine methylation"/>
    <property type="evidence" value="ECO:0007669"/>
    <property type="project" value="TreeGrafter"/>
</dbReference>
<dbReference type="CDD" id="cd18080">
    <property type="entry name" value="TrmD-like"/>
    <property type="match status" value="1"/>
</dbReference>
<dbReference type="Gene3D" id="3.40.1280.10">
    <property type="match status" value="1"/>
</dbReference>
<dbReference type="Gene3D" id="1.10.1270.20">
    <property type="entry name" value="tRNA(m1g37)methyltransferase, domain 2"/>
    <property type="match status" value="1"/>
</dbReference>
<dbReference type="HAMAP" id="MF_00605">
    <property type="entry name" value="TrmD"/>
    <property type="match status" value="1"/>
</dbReference>
<dbReference type="InterPro" id="IPR029028">
    <property type="entry name" value="Alpha/beta_knot_MTases"/>
</dbReference>
<dbReference type="InterPro" id="IPR023148">
    <property type="entry name" value="tRNA_m1G_MeTrfase_C_sf"/>
</dbReference>
<dbReference type="InterPro" id="IPR002649">
    <property type="entry name" value="tRNA_m1G_MeTrfase_TrmD"/>
</dbReference>
<dbReference type="InterPro" id="IPR029026">
    <property type="entry name" value="tRNA_m1G_MTases_N"/>
</dbReference>
<dbReference type="InterPro" id="IPR016009">
    <property type="entry name" value="tRNA_MeTrfase_TRMD/TRM10"/>
</dbReference>
<dbReference type="NCBIfam" id="NF000648">
    <property type="entry name" value="PRK00026.1"/>
    <property type="match status" value="1"/>
</dbReference>
<dbReference type="NCBIfam" id="TIGR00088">
    <property type="entry name" value="trmD"/>
    <property type="match status" value="1"/>
</dbReference>
<dbReference type="PANTHER" id="PTHR46417">
    <property type="entry name" value="TRNA (GUANINE-N(1)-)-METHYLTRANSFERASE"/>
    <property type="match status" value="1"/>
</dbReference>
<dbReference type="PANTHER" id="PTHR46417:SF1">
    <property type="entry name" value="TRNA (GUANINE-N(1)-)-METHYLTRANSFERASE"/>
    <property type="match status" value="1"/>
</dbReference>
<dbReference type="Pfam" id="PF01746">
    <property type="entry name" value="tRNA_m1G_MT"/>
    <property type="match status" value="1"/>
</dbReference>
<dbReference type="PIRSF" id="PIRSF000386">
    <property type="entry name" value="tRNA_mtase"/>
    <property type="match status" value="1"/>
</dbReference>
<dbReference type="SUPFAM" id="SSF75217">
    <property type="entry name" value="alpha/beta knot"/>
    <property type="match status" value="1"/>
</dbReference>